<comment type="similarity">
    <text evidence="1">Belongs to the barstar family.</text>
</comment>
<gene>
    <name type="primary">yhcO</name>
    <name type="ordered locus">Z4598</name>
    <name type="ordered locus">ECs4112</name>
</gene>
<feature type="chain" id="PRO_0000169490" description="Uncharacterized protein YhcO">
    <location>
        <begin position="1"/>
        <end position="90"/>
    </location>
</feature>
<feature type="strand" evidence="2">
    <location>
        <begin position="2"/>
        <end position="7"/>
    </location>
</feature>
<feature type="helix" evidence="2">
    <location>
        <begin position="14"/>
        <end position="24"/>
    </location>
</feature>
<feature type="helix" evidence="2">
    <location>
        <begin position="35"/>
        <end position="43"/>
    </location>
</feature>
<feature type="strand" evidence="2">
    <location>
        <begin position="49"/>
        <end position="57"/>
    </location>
</feature>
<feature type="helix" evidence="2">
    <location>
        <begin position="60"/>
        <end position="65"/>
    </location>
</feature>
<feature type="helix" evidence="2">
    <location>
        <begin position="67"/>
        <end position="79"/>
    </location>
</feature>
<feature type="turn" evidence="2">
    <location>
        <begin position="80"/>
        <end position="83"/>
    </location>
</feature>
<feature type="strand" evidence="2">
    <location>
        <begin position="84"/>
        <end position="88"/>
    </location>
</feature>
<organism>
    <name type="scientific">Escherichia coli O157:H7</name>
    <dbReference type="NCBI Taxonomy" id="83334"/>
    <lineage>
        <taxon>Bacteria</taxon>
        <taxon>Pseudomonadati</taxon>
        <taxon>Pseudomonadota</taxon>
        <taxon>Gammaproteobacteria</taxon>
        <taxon>Enterobacterales</taxon>
        <taxon>Enterobacteriaceae</taxon>
        <taxon>Escherichia</taxon>
    </lineage>
</organism>
<proteinExistence type="evidence at protein level"/>
<sequence length="90" mass="10796">MNIYTFDFDEIESQEDFYRDFSQTFGLAKDKVRDLDSLWDVLMNDVLPLPLEIEFVHLGEKTRRRFGALILLFDEAEEELEGHLRFNVRH</sequence>
<reference key="1">
    <citation type="journal article" date="2001" name="Nature">
        <title>Genome sequence of enterohaemorrhagic Escherichia coli O157:H7.</title>
        <authorList>
            <person name="Perna N.T."/>
            <person name="Plunkett G. III"/>
            <person name="Burland V."/>
            <person name="Mau B."/>
            <person name="Glasner J.D."/>
            <person name="Rose D.J."/>
            <person name="Mayhew G.F."/>
            <person name="Evans P.S."/>
            <person name="Gregor J."/>
            <person name="Kirkpatrick H.A."/>
            <person name="Posfai G."/>
            <person name="Hackett J."/>
            <person name="Klink S."/>
            <person name="Boutin A."/>
            <person name="Shao Y."/>
            <person name="Miller L."/>
            <person name="Grotbeck E.J."/>
            <person name="Davis N.W."/>
            <person name="Lim A."/>
            <person name="Dimalanta E.T."/>
            <person name="Potamousis K."/>
            <person name="Apodaca J."/>
            <person name="Anantharaman T.S."/>
            <person name="Lin J."/>
            <person name="Yen G."/>
            <person name="Schwartz D.C."/>
            <person name="Welch R.A."/>
            <person name="Blattner F.R."/>
        </authorList>
    </citation>
    <scope>NUCLEOTIDE SEQUENCE [LARGE SCALE GENOMIC DNA]</scope>
    <source>
        <strain>O157:H7 / EDL933 / ATCC 700927 / EHEC</strain>
    </source>
</reference>
<reference key="2">
    <citation type="journal article" date="2001" name="DNA Res.">
        <title>Complete genome sequence of enterohemorrhagic Escherichia coli O157:H7 and genomic comparison with a laboratory strain K-12.</title>
        <authorList>
            <person name="Hayashi T."/>
            <person name="Makino K."/>
            <person name="Ohnishi M."/>
            <person name="Kurokawa K."/>
            <person name="Ishii K."/>
            <person name="Yokoyama K."/>
            <person name="Han C.-G."/>
            <person name="Ohtsubo E."/>
            <person name="Nakayama K."/>
            <person name="Murata T."/>
            <person name="Tanaka M."/>
            <person name="Tobe T."/>
            <person name="Iida T."/>
            <person name="Takami H."/>
            <person name="Honda T."/>
            <person name="Sasakawa C."/>
            <person name="Ogasawara N."/>
            <person name="Yasunaga T."/>
            <person name="Kuhara S."/>
            <person name="Shiba T."/>
            <person name="Hattori M."/>
            <person name="Shinagawa H."/>
        </authorList>
    </citation>
    <scope>NUCLEOTIDE SEQUENCE [LARGE SCALE GENOMIC DNA]</scope>
    <source>
        <strain>O157:H7 / Sakai / RIMD 0509952 / EHEC</strain>
    </source>
</reference>
<reference key="3">
    <citation type="submission" date="2009-02" db="PDB data bank">
        <title>Crystal structure of ribonuclease inhibitor barstar.</title>
        <authorList>
            <consortium name="RIKEN structural genomics initiative (RSGI)"/>
        </authorList>
    </citation>
    <scope>X-RAY CRYSTALLOGRAPHY (2.43 ANGSTROMS)</scope>
</reference>
<keyword id="KW-0002">3D-structure</keyword>
<keyword id="KW-1185">Reference proteome</keyword>
<accession>P64618</accession>
<accession>P46480</accession>
<dbReference type="EMBL" id="AE005174">
    <property type="protein sequence ID" value="AAG58367.1"/>
    <property type="molecule type" value="Genomic_DNA"/>
</dbReference>
<dbReference type="EMBL" id="BA000007">
    <property type="protein sequence ID" value="BAB37535.1"/>
    <property type="molecule type" value="Genomic_DNA"/>
</dbReference>
<dbReference type="PIR" id="C85988">
    <property type="entry name" value="C85988"/>
</dbReference>
<dbReference type="PIR" id="H91142">
    <property type="entry name" value="H91142"/>
</dbReference>
<dbReference type="RefSeq" id="NP_312139.1">
    <property type="nucleotide sequence ID" value="NC_002695.1"/>
</dbReference>
<dbReference type="RefSeq" id="WP_001029013.1">
    <property type="nucleotide sequence ID" value="NZ_VOAI01000014.1"/>
</dbReference>
<dbReference type="PDB" id="2CX6">
    <property type="method" value="X-ray"/>
    <property type="resolution" value="2.43 A"/>
    <property type="chains" value="A/B=1-90"/>
</dbReference>
<dbReference type="PDBsum" id="2CX6"/>
<dbReference type="SMR" id="P64618"/>
<dbReference type="STRING" id="155864.Z4598"/>
<dbReference type="GeneID" id="916038"/>
<dbReference type="KEGG" id="ece:Z4598"/>
<dbReference type="KEGG" id="ecs:ECs_4112"/>
<dbReference type="PATRIC" id="fig|386585.9.peg.4293"/>
<dbReference type="eggNOG" id="COG2732">
    <property type="taxonomic scope" value="Bacteria"/>
</dbReference>
<dbReference type="HOGENOM" id="CLU_121832_2_0_6"/>
<dbReference type="OMA" id="PVEIDFI"/>
<dbReference type="EvolutionaryTrace" id="P64618"/>
<dbReference type="Proteomes" id="UP000000558">
    <property type="component" value="Chromosome"/>
</dbReference>
<dbReference type="Proteomes" id="UP000002519">
    <property type="component" value="Chromosome"/>
</dbReference>
<dbReference type="CDD" id="cd05142">
    <property type="entry name" value="Barstar"/>
    <property type="match status" value="1"/>
</dbReference>
<dbReference type="Gene3D" id="3.30.370.10">
    <property type="entry name" value="Barstar-like"/>
    <property type="match status" value="1"/>
</dbReference>
<dbReference type="InterPro" id="IPR000468">
    <property type="entry name" value="Barstar"/>
</dbReference>
<dbReference type="InterPro" id="IPR035905">
    <property type="entry name" value="Barstar-like_sf"/>
</dbReference>
<dbReference type="Pfam" id="PF01337">
    <property type="entry name" value="Barstar"/>
    <property type="match status" value="1"/>
</dbReference>
<dbReference type="SUPFAM" id="SSF52038">
    <property type="entry name" value="Barstar-related"/>
    <property type="match status" value="1"/>
</dbReference>
<evidence type="ECO:0000305" key="1"/>
<evidence type="ECO:0007829" key="2">
    <source>
        <dbReference type="PDB" id="2CX6"/>
    </source>
</evidence>
<protein>
    <recommendedName>
        <fullName>Uncharacterized protein YhcO</fullName>
    </recommendedName>
</protein>
<name>YHCO_ECO57</name>